<organism>
    <name type="scientific">Lactococcus lactis subsp. cremoris (strain SK11)</name>
    <dbReference type="NCBI Taxonomy" id="272622"/>
    <lineage>
        <taxon>Bacteria</taxon>
        <taxon>Bacillati</taxon>
        <taxon>Bacillota</taxon>
        <taxon>Bacilli</taxon>
        <taxon>Lactobacillales</taxon>
        <taxon>Streptococcaceae</taxon>
        <taxon>Lactococcus</taxon>
        <taxon>Lactococcus cremoris subsp. cremoris</taxon>
    </lineage>
</organism>
<accession>Q02VA9</accession>
<accession>Q09144</accession>
<proteinExistence type="inferred from homology"/>
<keyword id="KW-1003">Cell membrane</keyword>
<keyword id="KW-0449">Lipoprotein</keyword>
<keyword id="KW-0472">Membrane</keyword>
<keyword id="KW-0564">Palmitate</keyword>
<keyword id="KW-0571">Peptide transport</keyword>
<keyword id="KW-0614">Plasmid</keyword>
<keyword id="KW-0653">Protein transport</keyword>
<keyword id="KW-0732">Signal</keyword>
<keyword id="KW-0813">Transport</keyword>
<gene>
    <name evidence="3" type="primary">oppA</name>
    <name type="ordered locus">LACR_D17</name>
</gene>
<sequence>MNKLKVTLLASSVVLAATLLSACGSNQSSSTSTKKLKAGNFDVAYQNPDKAIKGGNLKVAYQSDSPMKAQWLSGLSNDATFATMSGPGGGQDGLFFTDSGFKFIKGGAADVALDKESKTATITLRKDLKWSDGSEVTAKDYEFTYETIANPAYGSDRWTDSLANIVGLSDYHAGKAKTISGITFPDGENGKVIKVQFKEMKPGMTQSGNGYFLETVAPYQYLKDVAPKDLASSPKTTTKPLVTGPFKPENVVAGESIKYVPNPYYWGKKPKLNSITYEVVSTAKSVAALSSSKYDFINGMVSSQYKQVKNLKGYKVLGQQAMAISLMYYNLGHYDAKNSINVQDRKTPLQDQNVRQAIGYARNVAEVANKFSNGLSTPANSLIPPIFKQFTSSSVKGYEKQDLDKANKLLDEDGWKLNKSTGYREKDGKELSLVYAAHVGDANAETIAQNYIQQWKKIGVKVSLYNGKLMEFNSWVDHMTTPPGANDWDITDGSWSLASEPSQQDLFSASAPYNFGHFNDSEITKDLNDIDSAKSENPTYRKAAFVKYQEDMNKKAYVVPTNFSLSYTPVNKRVVGMTLDYGAMDTWSEIGVSSAKLATK</sequence>
<comment type="function">
    <text evidence="1">Part of the ABC transporter complex OppABCDF involved in the uptake of oligopeptides.</text>
</comment>
<comment type="subunit">
    <text evidence="1">The complex is composed of two ATP-binding proteins (OppD and OppF), two transmembrane proteins (OppB and OppC) and a solute-binding protein (OppA).</text>
</comment>
<comment type="subcellular location">
    <subcellularLocation>
        <location evidence="2">Cell membrane</location>
        <topology evidence="2">Lipid-anchor</topology>
    </subcellularLocation>
</comment>
<comment type="similarity">
    <text evidence="4">Belongs to the bacterial solute-binding protein 5 family.</text>
</comment>
<geneLocation type="plasmid">
    <name>pSK11L</name>
</geneLocation>
<geneLocation type="plasmid">
    <name>pLACR4</name>
</geneLocation>
<dbReference type="EMBL" id="U09553">
    <property type="protein sequence ID" value="AAB00537.1"/>
    <property type="molecule type" value="Unassigned_DNA"/>
</dbReference>
<dbReference type="EMBL" id="CP000429">
    <property type="protein sequence ID" value="ABJ74113.1"/>
    <property type="molecule type" value="Genomic_DNA"/>
</dbReference>
<dbReference type="RefSeq" id="WP_011669110.1">
    <property type="nucleotide sequence ID" value="NC_008506.1"/>
</dbReference>
<dbReference type="SMR" id="Q02VA9"/>
<dbReference type="KEGG" id="llc:LACR_D17"/>
<dbReference type="HOGENOM" id="CLU_017028_8_0_9"/>
<dbReference type="Proteomes" id="UP000000240">
    <property type="component" value="Plasmid pLACR4"/>
</dbReference>
<dbReference type="GO" id="GO:0043190">
    <property type="term" value="C:ATP-binding cassette (ABC) transporter complex"/>
    <property type="evidence" value="ECO:0007669"/>
    <property type="project" value="InterPro"/>
</dbReference>
<dbReference type="GO" id="GO:0042597">
    <property type="term" value="C:periplasmic space"/>
    <property type="evidence" value="ECO:0007669"/>
    <property type="project" value="UniProtKB-ARBA"/>
</dbReference>
<dbReference type="GO" id="GO:1904680">
    <property type="term" value="F:peptide transmembrane transporter activity"/>
    <property type="evidence" value="ECO:0007669"/>
    <property type="project" value="TreeGrafter"/>
</dbReference>
<dbReference type="GO" id="GO:0015833">
    <property type="term" value="P:peptide transport"/>
    <property type="evidence" value="ECO:0007669"/>
    <property type="project" value="UniProtKB-KW"/>
</dbReference>
<dbReference type="GO" id="GO:0015031">
    <property type="term" value="P:protein transport"/>
    <property type="evidence" value="ECO:0007669"/>
    <property type="project" value="UniProtKB-KW"/>
</dbReference>
<dbReference type="CDD" id="cd08510">
    <property type="entry name" value="PBP2_Lactococcal_OppA_like"/>
    <property type="match status" value="1"/>
</dbReference>
<dbReference type="Gene3D" id="3.10.105.10">
    <property type="entry name" value="Dipeptide-binding Protein, Domain 3"/>
    <property type="match status" value="1"/>
</dbReference>
<dbReference type="Gene3D" id="3.40.190.10">
    <property type="entry name" value="Periplasmic binding protein-like II"/>
    <property type="match status" value="1"/>
</dbReference>
<dbReference type="InterPro" id="IPR030678">
    <property type="entry name" value="Peptide/Ni-bd"/>
</dbReference>
<dbReference type="InterPro" id="IPR039424">
    <property type="entry name" value="SBP_5"/>
</dbReference>
<dbReference type="InterPro" id="IPR023765">
    <property type="entry name" value="SBP_5_CS"/>
</dbReference>
<dbReference type="InterPro" id="IPR000914">
    <property type="entry name" value="SBP_5_dom"/>
</dbReference>
<dbReference type="PANTHER" id="PTHR30290:SF9">
    <property type="entry name" value="OLIGOPEPTIDE-BINDING PROTEIN APPA"/>
    <property type="match status" value="1"/>
</dbReference>
<dbReference type="PANTHER" id="PTHR30290">
    <property type="entry name" value="PERIPLASMIC BINDING COMPONENT OF ABC TRANSPORTER"/>
    <property type="match status" value="1"/>
</dbReference>
<dbReference type="Pfam" id="PF00496">
    <property type="entry name" value="SBP_bac_5"/>
    <property type="match status" value="1"/>
</dbReference>
<dbReference type="PIRSF" id="PIRSF002741">
    <property type="entry name" value="MppA"/>
    <property type="match status" value="1"/>
</dbReference>
<dbReference type="SUPFAM" id="SSF53850">
    <property type="entry name" value="Periplasmic binding protein-like II"/>
    <property type="match status" value="1"/>
</dbReference>
<dbReference type="PROSITE" id="PS51257">
    <property type="entry name" value="PROKAR_LIPOPROTEIN"/>
    <property type="match status" value="1"/>
</dbReference>
<dbReference type="PROSITE" id="PS01040">
    <property type="entry name" value="SBP_BACTERIAL_5"/>
    <property type="match status" value="1"/>
</dbReference>
<reference key="1">
    <citation type="journal article" date="1995" name="Dev. Biol. Stand.">
        <title>Plasmid-mediated oligopeptide transport system in lactococci.</title>
        <authorList>
            <person name="Yu W."/>
            <person name="Gillies K."/>
            <person name="Kondo J.K."/>
            <person name="Broadbent J.R."/>
            <person name="McKay L.L."/>
        </authorList>
    </citation>
    <scope>NUCLEOTIDE SEQUENCE [GENOMIC DNA]</scope>
    <source>
        <plasmid>pSK11L</plasmid>
    </source>
</reference>
<reference key="2">
    <citation type="journal article" date="2006" name="Proc. Natl. Acad. Sci. U.S.A.">
        <title>Comparative genomics of the lactic acid bacteria.</title>
        <authorList>
            <person name="Makarova K.S."/>
            <person name="Slesarev A."/>
            <person name="Wolf Y.I."/>
            <person name="Sorokin A."/>
            <person name="Mirkin B."/>
            <person name="Koonin E.V."/>
            <person name="Pavlov A."/>
            <person name="Pavlova N."/>
            <person name="Karamychev V."/>
            <person name="Polouchine N."/>
            <person name="Shakhova V."/>
            <person name="Grigoriev I."/>
            <person name="Lou Y."/>
            <person name="Rohksar D."/>
            <person name="Lucas S."/>
            <person name="Huang K."/>
            <person name="Goodstein D.M."/>
            <person name="Hawkins T."/>
            <person name="Plengvidhya V."/>
            <person name="Welker D."/>
            <person name="Hughes J."/>
            <person name="Goh Y."/>
            <person name="Benson A."/>
            <person name="Baldwin K."/>
            <person name="Lee J.-H."/>
            <person name="Diaz-Muniz I."/>
            <person name="Dosti B."/>
            <person name="Smeianov V."/>
            <person name="Wechter W."/>
            <person name="Barabote R."/>
            <person name="Lorca G."/>
            <person name="Altermann E."/>
            <person name="Barrangou R."/>
            <person name="Ganesan B."/>
            <person name="Xie Y."/>
            <person name="Rawsthorne H."/>
            <person name="Tamir D."/>
            <person name="Parker C."/>
            <person name="Breidt F."/>
            <person name="Broadbent J.R."/>
            <person name="Hutkins R."/>
            <person name="O'Sullivan D."/>
            <person name="Steele J."/>
            <person name="Unlu G."/>
            <person name="Saier M.H. Jr."/>
            <person name="Klaenhammer T."/>
            <person name="Richardson P."/>
            <person name="Kozyavkin S."/>
            <person name="Weimer B.C."/>
            <person name="Mills D.A."/>
        </authorList>
    </citation>
    <scope>NUCLEOTIDE SEQUENCE [LARGE SCALE GENOMIC DNA]</scope>
    <source>
        <strain>SK11</strain>
        <plasmid>pLACR4</plasmid>
    </source>
</reference>
<name>OPPA_LACLS</name>
<feature type="signal peptide" evidence="2">
    <location>
        <begin position="1"/>
        <end position="22"/>
    </location>
</feature>
<feature type="chain" id="PRO_0000272022" description="Oligopeptide-binding protein OppA">
    <location>
        <begin position="23"/>
        <end position="600"/>
    </location>
</feature>
<feature type="lipid moiety-binding region" description="N-palmitoyl cysteine" evidence="2">
    <location>
        <position position="23"/>
    </location>
</feature>
<feature type="lipid moiety-binding region" description="S-diacylglycerol cysteine" evidence="2">
    <location>
        <position position="23"/>
    </location>
</feature>
<feature type="sequence conflict" description="In Ref. 1; AAB00537." evidence="4" ref="1">
    <original>A</original>
    <variation>T</variation>
    <location>
        <position position="173"/>
    </location>
</feature>
<feature type="sequence conflict" description="In Ref. 1; AAB00537." evidence="4" ref="1">
    <original>A</original>
    <variation>V</variation>
    <location>
        <position position="217"/>
    </location>
</feature>
<feature type="sequence conflict" description="In Ref. 1; AAB00537." evidence="4" ref="1">
    <original>K</original>
    <variation>E</variation>
    <location>
        <position position="268"/>
    </location>
</feature>
<feature type="sequence conflict" description="In Ref. 1; AAB00537." evidence="4" ref="1">
    <original>F</original>
    <variation>I</variation>
    <location>
        <position position="296"/>
    </location>
</feature>
<feature type="sequence conflict" description="In Ref. 1; AAB00537." evidence="4" ref="1">
    <original>A</original>
    <variation>Y</variation>
    <location>
        <position position="323"/>
    </location>
</feature>
<feature type="sequence conflict" description="In Ref. 1; AAB00537." evidence="4" ref="1">
    <original>A</original>
    <variation>D</variation>
    <location>
        <position position="368"/>
    </location>
</feature>
<feature type="sequence conflict" description="In Ref. 1; AAB00537." evidence="4" ref="1">
    <original>H</original>
    <variation>R</variation>
    <location>
        <position position="438"/>
    </location>
</feature>
<feature type="sequence conflict" description="In Ref. 1; AAB00537." evidence="4" ref="1">
    <original>W</original>
    <variation>L</variation>
    <location>
        <position position="455"/>
    </location>
</feature>
<feature type="sequence conflict" description="In Ref. 1; AAB00537." evidence="4" ref="1">
    <original>S</original>
    <variation>A</variation>
    <location>
        <position position="510"/>
    </location>
</feature>
<feature type="sequence conflict" description="In Ref. 1; AAB00537." evidence="4" ref="1">
    <original>V</original>
    <variation>I</variation>
    <location>
        <position position="559"/>
    </location>
</feature>
<feature type="sequence conflict" description="In Ref. 1; AAB00537." evidence="4" ref="1">
    <original>SLS</original>
    <variation>MLN</variation>
    <location>
        <begin position="564"/>
        <end position="566"/>
    </location>
</feature>
<feature type="sequence conflict" description="In Ref. 1; AAB00537." evidence="4" ref="1">
    <original>D</original>
    <variation>N</variation>
    <location>
        <position position="585"/>
    </location>
</feature>
<evidence type="ECO:0000250" key="1">
    <source>
        <dbReference type="UniProtKB" id="Q07741"/>
    </source>
</evidence>
<evidence type="ECO:0000255" key="2">
    <source>
        <dbReference type="PROSITE-ProRule" id="PRU00303"/>
    </source>
</evidence>
<evidence type="ECO:0000303" key="3">
    <source>
    </source>
</evidence>
<evidence type="ECO:0000305" key="4"/>
<protein>
    <recommendedName>
        <fullName evidence="4">Oligopeptide-binding protein OppA</fullName>
    </recommendedName>
</protein>